<proteinExistence type="inferred from homology"/>
<accession>Q2S8R3</accession>
<sequence>MARVTVEDCLDHVDNRFELVMLASKRARQISQYGKDPKVEWENDKPTVVALREIAAGLITSEMLEQDED</sequence>
<dbReference type="EC" id="2.7.7.6" evidence="1"/>
<dbReference type="EMBL" id="CP000155">
    <property type="protein sequence ID" value="ABC32961.1"/>
    <property type="molecule type" value="Genomic_DNA"/>
</dbReference>
<dbReference type="SMR" id="Q2S8R3"/>
<dbReference type="STRING" id="349521.HCH_06314"/>
<dbReference type="KEGG" id="hch:HCH_06314"/>
<dbReference type="eggNOG" id="COG1758">
    <property type="taxonomic scope" value="Bacteria"/>
</dbReference>
<dbReference type="HOGENOM" id="CLU_125406_5_2_6"/>
<dbReference type="OrthoDB" id="9796300at2"/>
<dbReference type="Proteomes" id="UP000000238">
    <property type="component" value="Chromosome"/>
</dbReference>
<dbReference type="GO" id="GO:0000428">
    <property type="term" value="C:DNA-directed RNA polymerase complex"/>
    <property type="evidence" value="ECO:0007669"/>
    <property type="project" value="UniProtKB-KW"/>
</dbReference>
<dbReference type="GO" id="GO:0003677">
    <property type="term" value="F:DNA binding"/>
    <property type="evidence" value="ECO:0007669"/>
    <property type="project" value="UniProtKB-UniRule"/>
</dbReference>
<dbReference type="GO" id="GO:0003899">
    <property type="term" value="F:DNA-directed RNA polymerase activity"/>
    <property type="evidence" value="ECO:0007669"/>
    <property type="project" value="UniProtKB-UniRule"/>
</dbReference>
<dbReference type="GO" id="GO:0006351">
    <property type="term" value="P:DNA-templated transcription"/>
    <property type="evidence" value="ECO:0007669"/>
    <property type="project" value="UniProtKB-UniRule"/>
</dbReference>
<dbReference type="Gene3D" id="3.90.940.10">
    <property type="match status" value="1"/>
</dbReference>
<dbReference type="HAMAP" id="MF_00366">
    <property type="entry name" value="RNApol_bact_RpoZ"/>
    <property type="match status" value="1"/>
</dbReference>
<dbReference type="InterPro" id="IPR003716">
    <property type="entry name" value="DNA-dir_RNA_pol_omega"/>
</dbReference>
<dbReference type="InterPro" id="IPR006110">
    <property type="entry name" value="Pol_omega/Rpo6/RPB6"/>
</dbReference>
<dbReference type="InterPro" id="IPR036161">
    <property type="entry name" value="RPB6/omega-like_sf"/>
</dbReference>
<dbReference type="NCBIfam" id="TIGR00690">
    <property type="entry name" value="rpoZ"/>
    <property type="match status" value="1"/>
</dbReference>
<dbReference type="PANTHER" id="PTHR34476">
    <property type="entry name" value="DNA-DIRECTED RNA POLYMERASE SUBUNIT OMEGA"/>
    <property type="match status" value="1"/>
</dbReference>
<dbReference type="PANTHER" id="PTHR34476:SF1">
    <property type="entry name" value="DNA-DIRECTED RNA POLYMERASE SUBUNIT OMEGA"/>
    <property type="match status" value="1"/>
</dbReference>
<dbReference type="Pfam" id="PF01192">
    <property type="entry name" value="RNA_pol_Rpb6"/>
    <property type="match status" value="1"/>
</dbReference>
<dbReference type="SMART" id="SM01409">
    <property type="entry name" value="RNA_pol_Rpb6"/>
    <property type="match status" value="1"/>
</dbReference>
<dbReference type="SUPFAM" id="SSF63562">
    <property type="entry name" value="RPB6/omega subunit-like"/>
    <property type="match status" value="1"/>
</dbReference>
<comment type="function">
    <text evidence="1">Promotes RNA polymerase assembly. Latches the N- and C-terminal regions of the beta' subunit thereby facilitating its interaction with the beta and alpha subunits.</text>
</comment>
<comment type="catalytic activity">
    <reaction evidence="1">
        <text>RNA(n) + a ribonucleoside 5'-triphosphate = RNA(n+1) + diphosphate</text>
        <dbReference type="Rhea" id="RHEA:21248"/>
        <dbReference type="Rhea" id="RHEA-COMP:14527"/>
        <dbReference type="Rhea" id="RHEA-COMP:17342"/>
        <dbReference type="ChEBI" id="CHEBI:33019"/>
        <dbReference type="ChEBI" id="CHEBI:61557"/>
        <dbReference type="ChEBI" id="CHEBI:140395"/>
        <dbReference type="EC" id="2.7.7.6"/>
    </reaction>
</comment>
<comment type="subunit">
    <text evidence="1">The RNAP catalytic core consists of 2 alpha, 1 beta, 1 beta' and 1 omega subunit. When a sigma factor is associated with the core the holoenzyme is formed, which can initiate transcription.</text>
</comment>
<comment type="similarity">
    <text evidence="1">Belongs to the RNA polymerase subunit omega family.</text>
</comment>
<gene>
    <name evidence="1" type="primary">rpoZ</name>
    <name type="ordered locus">HCH_06314</name>
</gene>
<evidence type="ECO:0000255" key="1">
    <source>
        <dbReference type="HAMAP-Rule" id="MF_00366"/>
    </source>
</evidence>
<organism>
    <name type="scientific">Hahella chejuensis (strain KCTC 2396)</name>
    <dbReference type="NCBI Taxonomy" id="349521"/>
    <lineage>
        <taxon>Bacteria</taxon>
        <taxon>Pseudomonadati</taxon>
        <taxon>Pseudomonadota</taxon>
        <taxon>Gammaproteobacteria</taxon>
        <taxon>Oceanospirillales</taxon>
        <taxon>Hahellaceae</taxon>
        <taxon>Hahella</taxon>
    </lineage>
</organism>
<keyword id="KW-0240">DNA-directed RNA polymerase</keyword>
<keyword id="KW-0548">Nucleotidyltransferase</keyword>
<keyword id="KW-1185">Reference proteome</keyword>
<keyword id="KW-0804">Transcription</keyword>
<keyword id="KW-0808">Transferase</keyword>
<protein>
    <recommendedName>
        <fullName evidence="1">DNA-directed RNA polymerase subunit omega</fullName>
        <shortName evidence="1">RNAP omega subunit</shortName>
        <ecNumber evidence="1">2.7.7.6</ecNumber>
    </recommendedName>
    <alternativeName>
        <fullName evidence="1">RNA polymerase omega subunit</fullName>
    </alternativeName>
    <alternativeName>
        <fullName evidence="1">Transcriptase subunit omega</fullName>
    </alternativeName>
</protein>
<name>RPOZ_HAHCH</name>
<feature type="chain" id="PRO_0000237465" description="DNA-directed RNA polymerase subunit omega">
    <location>
        <begin position="1"/>
        <end position="69"/>
    </location>
</feature>
<reference key="1">
    <citation type="journal article" date="2005" name="Nucleic Acids Res.">
        <title>Genomic blueprint of Hahella chejuensis, a marine microbe producing an algicidal agent.</title>
        <authorList>
            <person name="Jeong H."/>
            <person name="Yim J.H."/>
            <person name="Lee C."/>
            <person name="Choi S.-H."/>
            <person name="Park Y.K."/>
            <person name="Yoon S.H."/>
            <person name="Hur C.-G."/>
            <person name="Kang H.-Y."/>
            <person name="Kim D."/>
            <person name="Lee H.H."/>
            <person name="Park K.H."/>
            <person name="Park S.-H."/>
            <person name="Park H.-S."/>
            <person name="Lee H.K."/>
            <person name="Oh T.K."/>
            <person name="Kim J.F."/>
        </authorList>
    </citation>
    <scope>NUCLEOTIDE SEQUENCE [LARGE SCALE GENOMIC DNA]</scope>
    <source>
        <strain>KCTC 2396</strain>
    </source>
</reference>